<comment type="similarity">
    <text evidence="1">Belongs to the UPF0174 family.</text>
</comment>
<dbReference type="EMBL" id="AE001439">
    <property type="protein sequence ID" value="AAD07072.1"/>
    <property type="molecule type" value="Genomic_DNA"/>
</dbReference>
<dbReference type="PIR" id="A71800">
    <property type="entry name" value="A71800"/>
</dbReference>
<dbReference type="SMR" id="Q9ZJ25"/>
<dbReference type="KEGG" id="hpj:jhp_1493"/>
<dbReference type="eggNOG" id="COG4735">
    <property type="taxonomic scope" value="Bacteria"/>
</dbReference>
<dbReference type="Proteomes" id="UP000000804">
    <property type="component" value="Chromosome"/>
</dbReference>
<dbReference type="InterPro" id="IPR021150">
    <property type="entry name" value="Ubiq_cyt_c_chap"/>
</dbReference>
<dbReference type="Pfam" id="PF03981">
    <property type="entry name" value="Ubiq_cyt_C_chap"/>
    <property type="match status" value="1"/>
</dbReference>
<proteinExistence type="inferred from homology"/>
<sequence>MNEELTSLTEYQRYGHDYAKYPRRIAEELQRYGGNSFANFFRDEGVLYKEILCDACDHLDINYNERSATSLIEQNMLSKLLKDSLEKMSGREIKELCDGLGMPNIDKVIGENKQVLIASVLTLFKAGGSHSYALAVAVADAMVRQTLGHGLSSVVGKVALKKTLDILAGPIGWVITGALVSINLAGPAYRVTVPACVLVATLRKKLKAE</sequence>
<reference key="1">
    <citation type="journal article" date="1999" name="Nature">
        <title>Genomic sequence comparison of two unrelated isolates of the human gastric pathogen Helicobacter pylori.</title>
        <authorList>
            <person name="Alm R.A."/>
            <person name="Ling L.-S.L."/>
            <person name="Moir D.T."/>
            <person name="King B.L."/>
            <person name="Brown E.D."/>
            <person name="Doig P.C."/>
            <person name="Smith D.R."/>
            <person name="Noonan B."/>
            <person name="Guild B.C."/>
            <person name="deJonge B.L."/>
            <person name="Carmel G."/>
            <person name="Tummino P.J."/>
            <person name="Caruso A."/>
            <person name="Uria-Nickelsen M."/>
            <person name="Mills D.M."/>
            <person name="Ives C."/>
            <person name="Gibson R."/>
            <person name="Merberg D."/>
            <person name="Mills S.D."/>
            <person name="Jiang Q."/>
            <person name="Taylor D.E."/>
            <person name="Vovis G.F."/>
            <person name="Trust T.J."/>
        </authorList>
    </citation>
    <scope>NUCLEOTIDE SEQUENCE [LARGE SCALE GENOMIC DNA]</scope>
    <source>
        <strain>J99 / ATCC 700824</strain>
    </source>
</reference>
<feature type="chain" id="PRO_0000216422" description="UPF0174 protein jhp_1493">
    <location>
        <begin position="1"/>
        <end position="209"/>
    </location>
</feature>
<gene>
    <name type="ordered locus">jhp_1493</name>
</gene>
<protein>
    <recommendedName>
        <fullName>UPF0174 protein jhp_1493</fullName>
    </recommendedName>
</protein>
<name>YF87_HELPJ</name>
<organism>
    <name type="scientific">Helicobacter pylori (strain J99 / ATCC 700824)</name>
    <name type="common">Campylobacter pylori J99</name>
    <dbReference type="NCBI Taxonomy" id="85963"/>
    <lineage>
        <taxon>Bacteria</taxon>
        <taxon>Pseudomonadati</taxon>
        <taxon>Campylobacterota</taxon>
        <taxon>Epsilonproteobacteria</taxon>
        <taxon>Campylobacterales</taxon>
        <taxon>Helicobacteraceae</taxon>
        <taxon>Helicobacter</taxon>
    </lineage>
</organism>
<accession>Q9ZJ25</accession>
<evidence type="ECO:0000305" key="1"/>